<sequence>MATQADLMELDMAMEPDRKAAVSHWQQQSYLDSGIHSGATTTAPSLSGKGNPEEEDVDTTQVLYEWEQGFSQSFTQEQVADIDGQYAMTRAQRVRAAMFPETLDEGMQIPSTQFDAAHPTNVQRLAEPSQMLKHAVVNLINYQDDAELATRAIPELTKLLNDEDQVVVNKAAVMVHQLSKKEASRHAIMRSPQMVSAIVRTMQNTNDVETARCTAGTLHNLSHHREGLLAIFKSGGIPALVKMLGSPVDSVLFYAITTLHNLLLHQEGAKMAVRLAGGLQKMVALLNKTNVKFLAITTDCLQILAYGNQESKLIILASGGPQALVNIMRTYTYEKLLWTTSRVLKVLSVCSSNKPAIVEAGGMQALGLHLTDPSQRLVQNCLWTLRNLSDAATKQEGMEGLLGTLVQLLGSDDINVVTCAAGILSNLTCNNYKNKMMVCQVGGIEALVRTVLRAGDREDITEPAICALRHLTSRHQEAEMAQNAVRLHYGLPVVVKLLHPPSHWPLIKATVGLIRNLALCPANHAPLREQGAIPRLVQLLVRAHQDTQRRTSMGGTQQQFVEGVRMEEIVEGCTGALHILARDVHNRIVIRGLNTIPLFVQLLYSPIENIQRVAAGVLCELAQDKEAAEAIEAEGATAPLTELLHSRNEGVATYAAAVLFRMSEDKPQDYKKRLSVELTSSLFRTEPMAWNETADLGLDIGAQGEPLGYRQDDPSYRSFHSGGYGQDALGMDPMMEHEMGGHHPGADYPVDGLPDLGHAQDLMDGLPPGDSNQLAWFDTDL</sequence>
<protein>
    <recommendedName>
        <fullName evidence="4">Catenin beta-1</fullName>
    </recommendedName>
    <alternativeName>
        <fullName evidence="8">Beta-catenin</fullName>
    </alternativeName>
</protein>
<organism>
    <name type="scientific">Bos taurus</name>
    <name type="common">Bovine</name>
    <dbReference type="NCBI Taxonomy" id="9913"/>
    <lineage>
        <taxon>Eukaryota</taxon>
        <taxon>Metazoa</taxon>
        <taxon>Chordata</taxon>
        <taxon>Craniata</taxon>
        <taxon>Vertebrata</taxon>
        <taxon>Euteleostomi</taxon>
        <taxon>Mammalia</taxon>
        <taxon>Eutheria</taxon>
        <taxon>Laurasiatheria</taxon>
        <taxon>Artiodactyla</taxon>
        <taxon>Ruminantia</taxon>
        <taxon>Pecora</taxon>
        <taxon>Bovidae</taxon>
        <taxon>Bovinae</taxon>
        <taxon>Bos</taxon>
    </lineage>
</organism>
<comment type="function">
    <text evidence="3 4">Key downstream component of the canonical Wnt signaling pathway (By similarity). In the absence of Wnt, forms a complex with AXIN1, AXIN2, APC, CSNK1A1 and GSK3B that promotes phosphorylation on N-terminal Ser and Thr residues and ubiquitination of CTNNB1 via BTRC and its subsequent degradation by the proteasome. In the presence of Wnt ligand, CTNNB1 is not ubiquitinated and accumulates in the nucleus, where it acts as a coactivator for transcription factors of the TCF/LEF family, leading to activate Wnt responsive genes (By similarity). Also acts as a coactivator for other transcription factors, such as NR5A2 (By similarity). Promotes epithelial to mesenchymal transition/mesenchymal to epithelial transition (EMT/MET) via driving transcription of CTNNB1/TCF-target genes (By similarity). Involved in the regulation of cell adhesion, as component of an E-cadherin:catenin adhesion complex (By similarity). Acts as a negative regulator of centrosome cohesion. Involved in the CDK2/PTPN6/CTNNB1/CEACAM1 pathway of insulin internalization. Blocks anoikis of malignant kidney and intestinal epithelial cells and promotes their anchorage-independent growth by down-regulating DAPK2. Disrupts PML function and PML-NB formation by inhibiting RANBP2-mediated sumoylation of PML (By similarity). Promotes neurogenesis by maintaining sympathetic neuroblasts within the cell cycle. Involved in chondrocyte differentiation via interaction with SOX9: SOX9-binding competes with the binding sites of TCF/LEF within CTNNB1, thereby inhibiting the Wnt signaling (By similarity). Acts as a positive regulator of odontoblast differentiation during mesenchymal tooth germ formation, via promoting the transcription of differentiation factors such as LEF1, BMP2 and BMP4 (By similarity). Activity is repressed in a MSX1-mediated manner at the bell stage of mesenchymal tooth germ formation which prevents premature differentiation of odontoblasts (By similarity).</text>
</comment>
<comment type="subunit">
    <text evidence="3 4 7">Two separate complex-associated pools are found in the cytoplasm. The majority is present as component of an E-cadherin/ catenin adhesion complex composed of at least E-cadherin/CDH1 and beta-catenin/CTNNB1, and possibly alpha-catenin/CTNNA1; the complex is located to adherens junctions. The stable association of CTNNA1 is controversial as CTNNA1 was shown not to bind to F-actin when assembled in the complex. Alternatively, the CTNNA1-containing complex may be linked to F-actin by other proteins such as LIMA1. Another cytoplasmic pool is part of a large complex containing AXIN1, AXIN2, APC, CSNK1A1 and GSK3B that promotes phosphorylation on N-terminal Ser and Thr residues and ubiquitination of CTNNB1 via BTRC and its subsequent degradation by the proteasome. Wnt-dependent activation of DVL antagonizes the action of GSK3B. When GSK3B activity is inhibited the complex dissociates, CTNNB1 is dephosphorylated and is no longer targeted for destruction. The stabilized protein translocates to the nucleus, where it binds TCF/LEF-1 family members, BCL9, BCL9L and possibly also RUVBL1 and CHD8. Binds CTNNBIP and EP300. CTNNB1 forms a ternary complex with LEF1 and EP300 that is disrupted by CTNNBIP1 binding. Interacts with TAX1BP3 (via the PDZ domain); this interaction inhibits the transcriptional activity of CTNNB1. Interacts with AJAP1, BAIAP1, CARM1, CTNNA3, CXADR and PCDH11Y. Binds NHERF1. Interacts with GLIS2 and SLC30A9. Interacts with XIRP1 and MUC1. Interacts with PTPRU (via the cytoplasmic juxtamembrane domain) and with EMD. Interacts with SCRIB. Interacts with TNIK. Interacts with SESTD1 and TRPC4. Interacts directly with AXIN1; the interaction is regulated by CDK2 phosphorylation of AXIN1. Interacts with CAV1. Interacts with TRPV4. The TRPV4 and CTNNB1 complex can interact with CDH1. Interacts with VCL. Interacts with PTPRJ. Interacts with PKT7. Interacts with FAT1 (via the cytoplasmic domain). Interacts with NANOS1 and NDRG2. Interacts with NEK2, CDK2 and CDK5. Interacts with PTK6. Interacts with SOX7; this interaction may lead to proteasomal degradation of active CTNNB1 and thus inhibition of Wnt/beta-catenin-stimulated transcription. Identified in a complex with HINT1 and MITF. Interacts with FHIT. The CTNNB1 and TCF4 complex interacts with PML. Interacts with FERMT2. Identified in a complex with TCF4 and FERMT2. Interacts with RORA. May interact with P-cadherin/CDH3 (By similarity). Interacts with RAPGEF2. Interacts with RNF220 (By similarity). Interacts with CTNND2 (By similarity). Interacts (via the C-terminal region) with CBY1 (By similarity). The complex composed, at least, of APC, CTNNB1 and GSK3B interacts with JPT1; the interaction requires the inactive form of GSK3B (phosphorylated at 'Ser-9'). Interacts with DLG5 (By similarity). Interacts with FAM53B; promoting translocation to the nucleus. Interacts with TMEM170B (By similarity). Interacts with AHI1 (By similarity). Interacts with GID8 (By similarity). Component of an cadherin:catenin adhesion complex composed of at least of CDH26, beta-catenin/CTNNB1, alpha-catenin/CTNNA1 and p120 catenin/CTNND1 (By similarity). Forms a complex comprising APPL1, RUVBL2, APPL2, HDAC1 and HDAC2 (By similarity). Interacts with IRF2BPL; mediates the ubiquitination and degradation of CTNNB1 (By similarity). Interacts with LMBR1L and AMFR (By similarity). Interacts with LMBR1L (By similarity). Interacts with SOX30; prevents interaction of CTNNB1 with TCF7L2/TCF4 and leads to inhibition of Wnt signaling (By similarity). Interacts with SOX9; inhibiting CTNNB1 activity by competing with the binding sites of TCF/LEF within CTNNB1, thereby inhibiting the Wnt signaling (By similarity). Interacts with SPN/CD43 cytoplasmic tail (By similarity). Interacts (when phosphorylated at Tyr-333) with isoform M2 of PKM (PKM2); promoting transcription activation (By similarity). Interacts with PKP2 (via HEAD domain) (By similarity). Interacts with CDH1 (By similarity). Interacts (when unphosphorylated) with FLYWCH1, perhaps preventing interaction of CTNNB1 with TCF4, and thereby regulating transcription activation; phosphorylation of CTNNB1 may inhibit the interaction (By similarity). Interacts (via the central armadillo domains) with probable transcriptional regulator ADNP (via N-terminal region); interaction is direct and stabilizes CTNNB1 by modulating its phosphorylation by glycogen synthase kinase-3 beta GSK3B (By similarity). Interacts with NR5A2 (By similarity). Interacts with DSG2; the interaction promotes localization of CTNNB1 at cell junctions thus reducing its nuclear localization and subsequent transcription of CTNNB1/TCF-target genes (By similarity).</text>
</comment>
<comment type="subcellular location">
    <subcellularLocation>
        <location evidence="3">Cytoplasm</location>
    </subcellularLocation>
    <subcellularLocation>
        <location evidence="3">Nucleus</location>
    </subcellularLocation>
    <subcellularLocation>
        <location evidence="2">Cytoplasm</location>
        <location evidence="2">Cytoskeleton</location>
    </subcellularLocation>
    <subcellularLocation>
        <location evidence="4">Cell junction</location>
        <location evidence="4">Adherens junction</location>
    </subcellularLocation>
    <subcellularLocation>
        <location evidence="2">Cell junction</location>
    </subcellularLocation>
    <subcellularLocation>
        <location evidence="3">Cell membrane</location>
    </subcellularLocation>
    <subcellularLocation>
        <location evidence="3">Cytoplasm</location>
        <location evidence="3">Cytoskeleton</location>
        <location evidence="3">Microtubule organizing center</location>
        <location evidence="3">Centrosome</location>
    </subcellularLocation>
    <subcellularLocation>
        <location evidence="3">Cytoplasm</location>
        <location evidence="3">Cytoskeleton</location>
        <location evidence="3">Spindle pole</location>
    </subcellularLocation>
    <subcellularLocation>
        <location evidence="4">Synapse</location>
    </subcellularLocation>
    <subcellularLocation>
        <location evidence="4">Cytoplasm</location>
        <location evidence="4">Cytoskeleton</location>
        <location evidence="4">Cilium basal body</location>
    </subcellularLocation>
    <text evidence="2 3 4">Colocalized with RAPGEF2 and TJP1 at cell-cell contacts (By similarity). Cytoplasmic when it is un-stable (highly phosphorylated) or bound to CDH1. Translocates to the nucleus when it is stabilized (low level of phosphorylation). Interaction with GLIS2 and MUC1 promotes nuclear translocation. Interaction with EMD inhibits nuclear localization. The majority of CTNNB1 is localized to the cell membrane. In interphase, colocalizes with CROCC between CEP250 puncta at the proximal end of centrioles, and this localization is dependent on CROCC and CEP250. In mitosis, when NEK2 activity increases, it localizes to centrosomes at spindle poles independent of CROCC. Colocalizes with CDK5 in the cell-cell contacts and plasma membrane of undifferentiated and differentiated neuroblastoma cells. Interaction with FAM53B promotes translocation to the nucleus (By similarity). Translocates to the nucleus in the presence of SNAIL1 (By similarity). Ca(2+)-mediated localization to the cell membrane in dental epithelial cells is inhibited via WNT3A (By similarity). Localizes to cell-cell contacts as keratinocyte differentiation progresses (By similarity).</text>
</comment>
<comment type="PTM">
    <text evidence="3 4">Phosphorylation by GSK3B requires prior phosphorylation of Ser-45 by another kinase. Phosphorylation proceeds then from Thr-41 to Ser-33. Phosphorylated by NEK2. EGF stimulates tyrosine phosphorylation. Phosphorylated on Ser-33 and Ser-37 by HIPK2. This phosphorylation triggers proteasomal degradation. Phosphorylation at Ser-552 by AMPK promotes stabilization of the protein, enhancing TCF/LEF-mediated transcription. Phosphorylation on Ser-191 and Ser-246 by CDK5. Phosphorylation by CDK2 regulates insulin internalization. Phosphorylation by PTK6 at Tyr-64, Tyr-142, Tyr-331 and/or Tyr-333 with the predominant site at Tyr-64 is not essential for inhibition of transcriptional activity. Phosphorylation by SRC at Tyr-333 promotes interaction with isoform M2 of PKM (PKM2); promoting transcription activation.</text>
</comment>
<comment type="PTM">
    <text evidence="3 4">Ubiquitinated by the SCF(BTRC) E3 ligase complex when phosphorylated by GSK3B, leading to its degradation. Ubiquitinated by a E3 ubiquitin ligase complex containing UBE2D1, SIAH1, CACYBP/SIP, SKP1, APC and TBL1X, leading to its subsequent proteasomal degradation (By similarity). Ubiquitinated and degraded following interaction with SOX9 (By similarity). Ubiquitinated via 'Lys-11'- and 'Lys-29'-linked ubiquitin chains by UBR5, leading to its stabilization (By similarity).</text>
</comment>
<comment type="PTM">
    <text evidence="1">S-nitrosylation at Cys-619 within adherens junctions promotes VEGF-induced, NO-dependent endothelial cell permeability by disrupting interaction with E-cadherin, thus mediating disassembly adherens junctions.</text>
</comment>
<comment type="PTM">
    <text evidence="5">O-glycosylation at Ser-23 decreases nuclear localization and transcriptional activity, and increases localization to the plasma membrane and interaction with E-cadherin CDH1.</text>
</comment>
<comment type="PTM">
    <text evidence="3">Deacetylated at Lys-49 by SIRT1.</text>
</comment>
<comment type="similarity">
    <text evidence="9">Belongs to the beta-catenin family.</text>
</comment>
<proteinExistence type="evidence at protein level"/>
<feature type="initiator methionine" description="Removed" evidence="3">
    <location>
        <position position="1"/>
    </location>
</feature>
<feature type="chain" id="PRO_0000282881" description="Catenin beta-1">
    <location>
        <begin position="2"/>
        <end position="781"/>
    </location>
</feature>
<feature type="repeat" description="ARM 1">
    <location>
        <begin position="151"/>
        <end position="191"/>
    </location>
</feature>
<feature type="repeat" description="ARM 2">
    <location>
        <begin position="193"/>
        <end position="234"/>
    </location>
</feature>
<feature type="repeat" description="ARM 3">
    <location>
        <begin position="235"/>
        <end position="276"/>
    </location>
</feature>
<feature type="repeat" description="ARM 4">
    <location>
        <begin position="277"/>
        <end position="318"/>
    </location>
</feature>
<feature type="repeat" description="ARM 5">
    <location>
        <begin position="319"/>
        <end position="360"/>
    </location>
</feature>
<feature type="repeat" description="ARM 6">
    <location>
        <begin position="361"/>
        <end position="389"/>
    </location>
</feature>
<feature type="repeat" description="ARM 7">
    <location>
        <begin position="400"/>
        <end position="441"/>
    </location>
</feature>
<feature type="repeat" description="ARM 8">
    <location>
        <begin position="442"/>
        <end position="484"/>
    </location>
</feature>
<feature type="repeat" description="ARM 9">
    <location>
        <begin position="489"/>
        <end position="530"/>
    </location>
</feature>
<feature type="repeat" description="ARM 10">
    <location>
        <begin position="531"/>
        <end position="571"/>
    </location>
</feature>
<feature type="repeat" description="ARM 11">
    <location>
        <begin position="594"/>
        <end position="636"/>
    </location>
</feature>
<feature type="repeat" description="ARM 12">
    <location>
        <begin position="637"/>
        <end position="666"/>
    </location>
</feature>
<feature type="region of interest" description="Interaction with VCL" evidence="1">
    <location>
        <begin position="2"/>
        <end position="23"/>
    </location>
</feature>
<feature type="region of interest" description="Disordered" evidence="6">
    <location>
        <begin position="34"/>
        <end position="56"/>
    </location>
</feature>
<feature type="region of interest" description="Interaction with BCL9" evidence="1">
    <location>
        <begin position="156"/>
        <end position="178"/>
    </location>
</feature>
<feature type="region of interest" description="Disordered" evidence="6">
    <location>
        <begin position="705"/>
        <end position="781"/>
    </location>
</feature>
<feature type="region of interest" description="Interaction with SCRIB" evidence="1">
    <location>
        <begin position="772"/>
        <end position="781"/>
    </location>
</feature>
<feature type="compositionally biased region" description="Basic and acidic residues" evidence="6">
    <location>
        <begin position="734"/>
        <end position="745"/>
    </location>
</feature>
<feature type="modified residue" description="N-acetylalanine" evidence="3">
    <location>
        <position position="2"/>
    </location>
</feature>
<feature type="modified residue" description="Phosphoserine; by GSK3-beta; alternate" evidence="3">
    <location>
        <position position="23"/>
    </location>
</feature>
<feature type="modified residue" description="Phosphoserine; by GSK3-beta" evidence="3">
    <location>
        <position position="29"/>
    </location>
</feature>
<feature type="modified residue" description="Phosphoserine; by GSK3-beta and HIPK2" evidence="3">
    <location>
        <position position="33"/>
    </location>
</feature>
<feature type="modified residue" description="Phosphoserine; by GSK3-beta and HIPK2" evidence="3">
    <location>
        <position position="37"/>
    </location>
</feature>
<feature type="modified residue" description="Phosphothreonine; by GSK3-beta" evidence="3">
    <location>
        <position position="41"/>
    </location>
</feature>
<feature type="modified residue" description="Phosphoserine" evidence="3">
    <location>
        <position position="45"/>
    </location>
</feature>
<feature type="modified residue" description="N6-acetyllysine" evidence="3">
    <location>
        <position position="49"/>
    </location>
</feature>
<feature type="modified residue" description="Phosphotyrosine; by PTK6" evidence="3">
    <location>
        <position position="64"/>
    </location>
</feature>
<feature type="modified residue" description="Phosphotyrosine; by FYN and PTK6" evidence="3">
    <location>
        <position position="142"/>
    </location>
</feature>
<feature type="modified residue" description="Phosphoserine; by CDK5" evidence="3">
    <location>
        <position position="191"/>
    </location>
</feature>
<feature type="modified residue" description="Phosphoserine; by CDK5" evidence="3">
    <location>
        <position position="246"/>
    </location>
</feature>
<feature type="modified residue" description="Phosphotyrosine" evidence="3">
    <location>
        <position position="331"/>
    </location>
</feature>
<feature type="modified residue" description="Phosphotyrosine" evidence="3">
    <location>
        <position position="333"/>
    </location>
</feature>
<feature type="modified residue" description="Phosphoserine; by AMPK" evidence="4">
    <location>
        <position position="552"/>
    </location>
</feature>
<feature type="modified residue" description="Phosphothreonine" evidence="3">
    <location>
        <position position="556"/>
    </location>
</feature>
<feature type="modified residue" description="S-nitrosocysteine" evidence="4">
    <location>
        <position position="619"/>
    </location>
</feature>
<feature type="modified residue" description="Phosphoserine" evidence="3">
    <location>
        <position position="675"/>
    </location>
</feature>
<feature type="glycosylation site" description="O-linked (GlcNAc) serine; alternate" evidence="5">
    <location>
        <position position="23"/>
    </location>
</feature>
<reference key="1">
    <citation type="journal article" date="2005" name="BMC Genomics">
        <title>Characterization of 954 bovine full-CDS cDNA sequences.</title>
        <authorList>
            <person name="Harhay G.P."/>
            <person name="Sonstegard T.S."/>
            <person name="Keele J.W."/>
            <person name="Heaton M.P."/>
            <person name="Clawson M.L."/>
            <person name="Snelling W.M."/>
            <person name="Wiedmann R.T."/>
            <person name="Van Tassell C.P."/>
            <person name="Smith T.P.L."/>
        </authorList>
    </citation>
    <scope>NUCLEOTIDE SEQUENCE [LARGE SCALE MRNA]</scope>
</reference>
<reference key="2">
    <citation type="submission" date="2006-08" db="EMBL/GenBank/DDBJ databases">
        <authorList>
            <consortium name="NIH - Mammalian Gene Collection (MGC) project"/>
        </authorList>
    </citation>
    <scope>NUCLEOTIDE SEQUENCE [LARGE SCALE MRNA]</scope>
    <source>
        <strain>Hereford</strain>
        <tissue>Fetal skin</tissue>
    </source>
</reference>
<reference key="3">
    <citation type="journal article" date="2000" name="Biochem. Biophys. Res. Commun.">
        <title>Identification of a novel beta-catenin-interacting protein.</title>
        <authorList>
            <person name="Kawajiri A."/>
            <person name="Itoh N."/>
            <person name="Fukata M."/>
            <person name="Nakagawa M."/>
            <person name="Yamaga M."/>
            <person name="Iwamatsu A."/>
            <person name="Kaibuchi K."/>
        </authorList>
    </citation>
    <scope>INTERACTION WITH RAPGEF2</scope>
</reference>
<accession>Q0VCX4</accession>
<accession>A7E3R2</accession>
<gene>
    <name evidence="4" type="primary">CTNNB1</name>
</gene>
<evidence type="ECO:0000250" key="1"/>
<evidence type="ECO:0000250" key="2">
    <source>
        <dbReference type="UniProtKB" id="B6V8E6"/>
    </source>
</evidence>
<evidence type="ECO:0000250" key="3">
    <source>
        <dbReference type="UniProtKB" id="P35222"/>
    </source>
</evidence>
<evidence type="ECO:0000250" key="4">
    <source>
        <dbReference type="UniProtKB" id="Q02248"/>
    </source>
</evidence>
<evidence type="ECO:0000250" key="5">
    <source>
        <dbReference type="UniProtKB" id="Q96S06"/>
    </source>
</evidence>
<evidence type="ECO:0000256" key="6">
    <source>
        <dbReference type="SAM" id="MobiDB-lite"/>
    </source>
</evidence>
<evidence type="ECO:0000269" key="7">
    <source>
    </source>
</evidence>
<evidence type="ECO:0000303" key="8">
    <source>
    </source>
</evidence>
<evidence type="ECO:0000305" key="9"/>
<name>CTNB1_BOVIN</name>
<keyword id="KW-0007">Acetylation</keyword>
<keyword id="KW-0010">Activator</keyword>
<keyword id="KW-0130">Cell adhesion</keyword>
<keyword id="KW-0965">Cell junction</keyword>
<keyword id="KW-1003">Cell membrane</keyword>
<keyword id="KW-0966">Cell projection</keyword>
<keyword id="KW-0963">Cytoplasm</keyword>
<keyword id="KW-0206">Cytoskeleton</keyword>
<keyword id="KW-0325">Glycoprotein</keyword>
<keyword id="KW-0472">Membrane</keyword>
<keyword id="KW-0524">Neurogenesis</keyword>
<keyword id="KW-0539">Nucleus</keyword>
<keyword id="KW-0597">Phosphoprotein</keyword>
<keyword id="KW-1185">Reference proteome</keyword>
<keyword id="KW-0677">Repeat</keyword>
<keyword id="KW-0702">S-nitrosylation</keyword>
<keyword id="KW-0770">Synapse</keyword>
<keyword id="KW-0804">Transcription</keyword>
<keyword id="KW-0805">Transcription regulation</keyword>
<keyword id="KW-0832">Ubl conjugation</keyword>
<keyword id="KW-0879">Wnt signaling pathway</keyword>
<dbReference type="EMBL" id="BT030683">
    <property type="protein sequence ID" value="ABS44999.1"/>
    <property type="molecule type" value="mRNA"/>
</dbReference>
<dbReference type="EMBL" id="BC119949">
    <property type="protein sequence ID" value="AAI19950.1"/>
    <property type="molecule type" value="mRNA"/>
</dbReference>
<dbReference type="RefSeq" id="NP_001069609.1">
    <property type="nucleotide sequence ID" value="NM_001076141.1"/>
</dbReference>
<dbReference type="RefSeq" id="XP_005222580.1">
    <property type="nucleotide sequence ID" value="XM_005222523.3"/>
</dbReference>
<dbReference type="RefSeq" id="XP_005222581.1">
    <property type="nucleotide sequence ID" value="XM_005222524.5"/>
</dbReference>
<dbReference type="RefSeq" id="XP_005222582.1">
    <property type="nucleotide sequence ID" value="XM_005222525.5"/>
</dbReference>
<dbReference type="RefSeq" id="XP_024838703.1">
    <property type="nucleotide sequence ID" value="XM_024982935.2"/>
</dbReference>
<dbReference type="RefSeq" id="XP_059735784.1">
    <property type="nucleotide sequence ID" value="XM_059879801.1"/>
</dbReference>
<dbReference type="RefSeq" id="XP_059735786.1">
    <property type="nucleotide sequence ID" value="XM_059879803.1"/>
</dbReference>
<dbReference type="SMR" id="Q0VCX4"/>
<dbReference type="CORUM" id="Q0VCX4"/>
<dbReference type="FunCoup" id="Q0VCX4">
    <property type="interactions" value="3579"/>
</dbReference>
<dbReference type="IntAct" id="Q0VCX4">
    <property type="interactions" value="1"/>
</dbReference>
<dbReference type="STRING" id="9913.ENSBTAP00000021838"/>
<dbReference type="GlyCosmos" id="Q0VCX4">
    <property type="glycosylation" value="1 site, No reported glycans"/>
</dbReference>
<dbReference type="GlyGen" id="Q0VCX4">
    <property type="glycosylation" value="1 site"/>
</dbReference>
<dbReference type="iPTMnet" id="Q0VCX4"/>
<dbReference type="PaxDb" id="9913-ENSBTAP00000021838"/>
<dbReference type="PeptideAtlas" id="Q0VCX4"/>
<dbReference type="GeneID" id="539003"/>
<dbReference type="KEGG" id="bta:539003"/>
<dbReference type="CTD" id="1499"/>
<dbReference type="VEuPathDB" id="HostDB:ENSBTAG00000016420"/>
<dbReference type="eggNOG" id="KOG4203">
    <property type="taxonomic scope" value="Eukaryota"/>
</dbReference>
<dbReference type="HOGENOM" id="CLU_008757_1_1_1"/>
<dbReference type="InParanoid" id="Q0VCX4"/>
<dbReference type="OMA" id="YPKLVYT"/>
<dbReference type="OrthoDB" id="195736at2759"/>
<dbReference type="TreeFam" id="TF317997"/>
<dbReference type="Reactome" id="R-BTA-195253">
    <property type="pathway name" value="Degradation of beta-catenin by the destruction complex"/>
</dbReference>
<dbReference type="Reactome" id="R-BTA-196299">
    <property type="pathway name" value="Beta-catenin phosphorylation cascade"/>
</dbReference>
<dbReference type="Reactome" id="R-BTA-201681">
    <property type="pathway name" value="TCF dependent signaling in response to WNT"/>
</dbReference>
<dbReference type="Reactome" id="R-BTA-201722">
    <property type="pathway name" value="Formation of the beta-catenin:TCF transactivating complex"/>
</dbReference>
<dbReference type="Reactome" id="R-BTA-3134973">
    <property type="pathway name" value="LRR FLII-interacting protein 1 (LRRFIP1) activates type I IFN production"/>
</dbReference>
<dbReference type="Reactome" id="R-BTA-351906">
    <property type="pathway name" value="Apoptotic cleavage of cell adhesion proteins"/>
</dbReference>
<dbReference type="Reactome" id="R-BTA-3769402">
    <property type="pathway name" value="Deactivation of the beta-catenin transactivating complex"/>
</dbReference>
<dbReference type="Reactome" id="R-BTA-4086398">
    <property type="pathway name" value="Ca2+ pathway"/>
</dbReference>
<dbReference type="Reactome" id="R-BTA-418990">
    <property type="pathway name" value="Adherens junctions interactions"/>
</dbReference>
<dbReference type="Reactome" id="R-BTA-4641262">
    <property type="pathway name" value="Disassembly of the destruction complex and recruitment of AXIN to the membrane"/>
</dbReference>
<dbReference type="Reactome" id="R-BTA-5218920">
    <property type="pathway name" value="VEGFR2 mediated vascular permeability"/>
</dbReference>
<dbReference type="Reactome" id="R-BTA-525793">
    <property type="pathway name" value="Myogenesis"/>
</dbReference>
<dbReference type="Reactome" id="R-BTA-5626467">
    <property type="pathway name" value="RHO GTPases activate IQGAPs"/>
</dbReference>
<dbReference type="Reactome" id="R-BTA-8951430">
    <property type="pathway name" value="RUNX3 regulates WNT signaling"/>
</dbReference>
<dbReference type="Reactome" id="R-BTA-9762292">
    <property type="pathway name" value="Regulation of CDH11 function"/>
</dbReference>
<dbReference type="Reactome" id="R-BTA-9825892">
    <property type="pathway name" value="Regulation of MITF-M-dependent genes involved in cell cycle and proliferation"/>
</dbReference>
<dbReference type="Proteomes" id="UP000009136">
    <property type="component" value="Chromosome 22"/>
</dbReference>
<dbReference type="Bgee" id="ENSBTAG00000016420">
    <property type="expression patterns" value="Expressed in thyroid gland and 104 other cell types or tissues"/>
</dbReference>
<dbReference type="GO" id="GO:0005912">
    <property type="term" value="C:adherens junction"/>
    <property type="evidence" value="ECO:0000250"/>
    <property type="project" value="UniProtKB"/>
</dbReference>
<dbReference type="GO" id="GO:0030877">
    <property type="term" value="C:beta-catenin destruction complex"/>
    <property type="evidence" value="ECO:0000250"/>
    <property type="project" value="UniProtKB"/>
</dbReference>
<dbReference type="GO" id="GO:0070369">
    <property type="term" value="C:beta-catenin-TCF7L2 complex"/>
    <property type="evidence" value="ECO:0000250"/>
    <property type="project" value="UniProtKB"/>
</dbReference>
<dbReference type="GO" id="GO:0016342">
    <property type="term" value="C:catenin complex"/>
    <property type="evidence" value="ECO:0000250"/>
    <property type="project" value="UniProtKB"/>
</dbReference>
<dbReference type="GO" id="GO:0005938">
    <property type="term" value="C:cell cortex"/>
    <property type="evidence" value="ECO:0000250"/>
    <property type="project" value="UniProtKB"/>
</dbReference>
<dbReference type="GO" id="GO:0030054">
    <property type="term" value="C:cell junction"/>
    <property type="evidence" value="ECO:0000250"/>
    <property type="project" value="UniProtKB"/>
</dbReference>
<dbReference type="GO" id="GO:0071944">
    <property type="term" value="C:cell periphery"/>
    <property type="evidence" value="ECO:0000250"/>
    <property type="project" value="UniProtKB"/>
</dbReference>
<dbReference type="GO" id="GO:0042995">
    <property type="term" value="C:cell projection"/>
    <property type="evidence" value="ECO:0007669"/>
    <property type="project" value="UniProtKB-KW"/>
</dbReference>
<dbReference type="GO" id="GO:0005911">
    <property type="term" value="C:cell-cell junction"/>
    <property type="evidence" value="ECO:0000250"/>
    <property type="project" value="UniProtKB"/>
</dbReference>
<dbReference type="GO" id="GO:0005813">
    <property type="term" value="C:centrosome"/>
    <property type="evidence" value="ECO:0000250"/>
    <property type="project" value="UniProtKB"/>
</dbReference>
<dbReference type="GO" id="GO:0005737">
    <property type="term" value="C:cytoplasm"/>
    <property type="evidence" value="ECO:0000250"/>
    <property type="project" value="UniProtKB"/>
</dbReference>
<dbReference type="GO" id="GO:0005829">
    <property type="term" value="C:cytosol"/>
    <property type="evidence" value="ECO:0000250"/>
    <property type="project" value="UniProtKB"/>
</dbReference>
<dbReference type="GO" id="GO:0016020">
    <property type="term" value="C:membrane"/>
    <property type="evidence" value="ECO:0000250"/>
    <property type="project" value="UniProtKB"/>
</dbReference>
<dbReference type="GO" id="GO:0005634">
    <property type="term" value="C:nucleus"/>
    <property type="evidence" value="ECO:0000250"/>
    <property type="project" value="UniProtKB"/>
</dbReference>
<dbReference type="GO" id="GO:0048471">
    <property type="term" value="C:perinuclear region of cytoplasm"/>
    <property type="evidence" value="ECO:0000250"/>
    <property type="project" value="UniProtKB"/>
</dbReference>
<dbReference type="GO" id="GO:0005886">
    <property type="term" value="C:plasma membrane"/>
    <property type="evidence" value="ECO:0000250"/>
    <property type="project" value="UniProtKB"/>
</dbReference>
<dbReference type="GO" id="GO:0032993">
    <property type="term" value="C:protein-DNA complex"/>
    <property type="evidence" value="ECO:0000250"/>
    <property type="project" value="UniProtKB"/>
</dbReference>
<dbReference type="GO" id="GO:0000922">
    <property type="term" value="C:spindle pole"/>
    <property type="evidence" value="ECO:0007669"/>
    <property type="project" value="UniProtKB-SubCell"/>
</dbReference>
<dbReference type="GO" id="GO:0045202">
    <property type="term" value="C:synapse"/>
    <property type="evidence" value="ECO:0000250"/>
    <property type="project" value="UniProtKB"/>
</dbReference>
<dbReference type="GO" id="GO:0005667">
    <property type="term" value="C:transcription regulator complex"/>
    <property type="evidence" value="ECO:0000250"/>
    <property type="project" value="UniProtKB"/>
</dbReference>
<dbReference type="GO" id="GO:0045294">
    <property type="term" value="F:alpha-catenin binding"/>
    <property type="evidence" value="ECO:0000318"/>
    <property type="project" value="GO_Central"/>
</dbReference>
<dbReference type="GO" id="GO:0045296">
    <property type="term" value="F:cadherin binding"/>
    <property type="evidence" value="ECO:0000318"/>
    <property type="project" value="GO_Central"/>
</dbReference>
<dbReference type="GO" id="GO:0016922">
    <property type="term" value="F:nuclear receptor binding"/>
    <property type="evidence" value="ECO:0000318"/>
    <property type="project" value="GO_Central"/>
</dbReference>
<dbReference type="GO" id="GO:0019903">
    <property type="term" value="F:protein phosphatase binding"/>
    <property type="evidence" value="ECO:0000318"/>
    <property type="project" value="GO_Central"/>
</dbReference>
<dbReference type="GO" id="GO:0061629">
    <property type="term" value="F:RNA polymerase II-specific DNA-binding transcription factor binding"/>
    <property type="evidence" value="ECO:0000250"/>
    <property type="project" value="UniProtKB"/>
</dbReference>
<dbReference type="GO" id="GO:0003713">
    <property type="term" value="F:transcription coactivator activity"/>
    <property type="evidence" value="ECO:0000250"/>
    <property type="project" value="UniProtKB"/>
</dbReference>
<dbReference type="GO" id="GO:0034333">
    <property type="term" value="P:adherens junction assembly"/>
    <property type="evidence" value="ECO:0000250"/>
    <property type="project" value="UniProtKB"/>
</dbReference>
<dbReference type="GO" id="GO:0060070">
    <property type="term" value="P:canonical Wnt signaling pathway"/>
    <property type="evidence" value="ECO:0000250"/>
    <property type="project" value="UniProtKB"/>
</dbReference>
<dbReference type="GO" id="GO:0007155">
    <property type="term" value="P:cell adhesion"/>
    <property type="evidence" value="ECO:0000250"/>
    <property type="project" value="UniProtKB"/>
</dbReference>
<dbReference type="GO" id="GO:0098609">
    <property type="term" value="P:cell-cell adhesion"/>
    <property type="evidence" value="ECO:0000318"/>
    <property type="project" value="GO_Central"/>
</dbReference>
<dbReference type="GO" id="GO:0044331">
    <property type="term" value="P:cell-cell adhesion mediated by cadherin"/>
    <property type="evidence" value="ECO:0000250"/>
    <property type="project" value="UniProtKB"/>
</dbReference>
<dbReference type="GO" id="GO:0071363">
    <property type="term" value="P:cellular response to growth factor stimulus"/>
    <property type="evidence" value="ECO:0000250"/>
    <property type="project" value="UniProtKB"/>
</dbReference>
<dbReference type="GO" id="GO:0071681">
    <property type="term" value="P:cellular response to indole-3-methanol"/>
    <property type="evidence" value="ECO:0000250"/>
    <property type="project" value="UniProtKB"/>
</dbReference>
<dbReference type="GO" id="GO:0061154">
    <property type="term" value="P:endothelial tube morphogenesis"/>
    <property type="evidence" value="ECO:0000250"/>
    <property type="project" value="UniProtKB"/>
</dbReference>
<dbReference type="GO" id="GO:0060231">
    <property type="term" value="P:mesenchymal to epithelial transition"/>
    <property type="evidence" value="ECO:0000250"/>
    <property type="project" value="UniProtKB"/>
</dbReference>
<dbReference type="GO" id="GO:0008285">
    <property type="term" value="P:negative regulation of cell population proliferation"/>
    <property type="evidence" value="ECO:0000250"/>
    <property type="project" value="UniProtKB"/>
</dbReference>
<dbReference type="GO" id="GO:0045892">
    <property type="term" value="P:negative regulation of DNA-templated transcription"/>
    <property type="evidence" value="ECO:0000250"/>
    <property type="project" value="UniProtKB"/>
</dbReference>
<dbReference type="GO" id="GO:0045976">
    <property type="term" value="P:negative regulation of mitotic cell cycle, embryonic"/>
    <property type="evidence" value="ECO:0000250"/>
    <property type="project" value="UniProtKB"/>
</dbReference>
<dbReference type="GO" id="GO:0033234">
    <property type="term" value="P:negative regulation of protein sumoylation"/>
    <property type="evidence" value="ECO:0000250"/>
    <property type="project" value="UniProtKB"/>
</dbReference>
<dbReference type="GO" id="GO:1990138">
    <property type="term" value="P:neuron projection extension"/>
    <property type="evidence" value="ECO:0000250"/>
    <property type="project" value="UniProtKB"/>
</dbReference>
<dbReference type="GO" id="GO:0043065">
    <property type="term" value="P:positive regulation of apoptotic process"/>
    <property type="evidence" value="ECO:0000250"/>
    <property type="project" value="UniProtKB"/>
</dbReference>
<dbReference type="GO" id="GO:0045893">
    <property type="term" value="P:positive regulation of DNA-templated transcription"/>
    <property type="evidence" value="ECO:0000250"/>
    <property type="project" value="UniProtKB"/>
</dbReference>
<dbReference type="GO" id="GO:0010909">
    <property type="term" value="P:positive regulation of heparan sulfate proteoglycan biosynthetic process"/>
    <property type="evidence" value="ECO:0000250"/>
    <property type="project" value="UniProtKB"/>
</dbReference>
<dbReference type="GO" id="GO:0002052">
    <property type="term" value="P:positive regulation of neuroblast proliferation"/>
    <property type="evidence" value="ECO:0000250"/>
    <property type="project" value="UniProtKB"/>
</dbReference>
<dbReference type="GO" id="GO:0045944">
    <property type="term" value="P:positive regulation of transcription by RNA polymerase II"/>
    <property type="evidence" value="ECO:0000250"/>
    <property type="project" value="UniProtKB"/>
</dbReference>
<dbReference type="GO" id="GO:0034394">
    <property type="term" value="P:protein localization to cell surface"/>
    <property type="evidence" value="ECO:0000250"/>
    <property type="project" value="UniProtKB"/>
</dbReference>
<dbReference type="GO" id="GO:0090279">
    <property type="term" value="P:regulation of calcium ion import"/>
    <property type="evidence" value="ECO:0000250"/>
    <property type="project" value="UniProtKB"/>
</dbReference>
<dbReference type="GO" id="GO:0030997">
    <property type="term" value="P:regulation of centriole-centriole cohesion"/>
    <property type="evidence" value="ECO:0000250"/>
    <property type="project" value="UniProtKB"/>
</dbReference>
<dbReference type="GO" id="GO:0070602">
    <property type="term" value="P:regulation of centromeric sister chromatid cohesion"/>
    <property type="evidence" value="ECO:0000250"/>
    <property type="project" value="UniProtKB"/>
</dbReference>
<dbReference type="GO" id="GO:0010717">
    <property type="term" value="P:regulation of epithelial to mesenchymal transition"/>
    <property type="evidence" value="ECO:0000250"/>
    <property type="project" value="UniProtKB"/>
</dbReference>
<dbReference type="GO" id="GO:2000008">
    <property type="term" value="P:regulation of protein localization to cell surface"/>
    <property type="evidence" value="ECO:0000250"/>
    <property type="project" value="UniProtKB"/>
</dbReference>
<dbReference type="GO" id="GO:0048660">
    <property type="term" value="P:regulation of smooth muscle cell proliferation"/>
    <property type="evidence" value="ECO:0000250"/>
    <property type="project" value="UniProtKB"/>
</dbReference>
<dbReference type="GO" id="GO:0032355">
    <property type="term" value="P:response to estradiol"/>
    <property type="evidence" value="ECO:0000250"/>
    <property type="project" value="UniProtKB"/>
</dbReference>
<dbReference type="GO" id="GO:0061549">
    <property type="term" value="P:sympathetic ganglion development"/>
    <property type="evidence" value="ECO:0000250"/>
    <property type="project" value="UniProtKB"/>
</dbReference>
<dbReference type="CDD" id="cd21724">
    <property type="entry name" value="CTNNAbd_CTNNB1"/>
    <property type="match status" value="1"/>
</dbReference>
<dbReference type="FunFam" id="1.25.10.10:FF:000015">
    <property type="entry name" value="Catenin beta-1"/>
    <property type="match status" value="1"/>
</dbReference>
<dbReference type="Gene3D" id="1.25.10.10">
    <property type="entry name" value="Leucine-rich Repeat Variant"/>
    <property type="match status" value="1"/>
</dbReference>
<dbReference type="InterPro" id="IPR011989">
    <property type="entry name" value="ARM-like"/>
</dbReference>
<dbReference type="InterPro" id="IPR016024">
    <property type="entry name" value="ARM-type_fold"/>
</dbReference>
<dbReference type="InterPro" id="IPR000225">
    <property type="entry name" value="Armadillo"/>
</dbReference>
<dbReference type="InterPro" id="IPR013284">
    <property type="entry name" value="Beta-catenin"/>
</dbReference>
<dbReference type="PANTHER" id="PTHR45976">
    <property type="entry name" value="ARMADILLO SEGMENT POLARITY PROTEIN"/>
    <property type="match status" value="1"/>
</dbReference>
<dbReference type="Pfam" id="PF00514">
    <property type="entry name" value="Arm"/>
    <property type="match status" value="4"/>
</dbReference>
<dbReference type="PRINTS" id="PR01869">
    <property type="entry name" value="BCATNINFAMLY"/>
</dbReference>
<dbReference type="SMART" id="SM00185">
    <property type="entry name" value="ARM"/>
    <property type="match status" value="12"/>
</dbReference>
<dbReference type="SUPFAM" id="SSF48371">
    <property type="entry name" value="ARM repeat"/>
    <property type="match status" value="1"/>
</dbReference>
<dbReference type="PROSITE" id="PS50176">
    <property type="entry name" value="ARM_REPEAT"/>
    <property type="match status" value="9"/>
</dbReference>